<organism>
    <name type="scientific">Bacillus subtilis (strain 168)</name>
    <dbReference type="NCBI Taxonomy" id="224308"/>
    <lineage>
        <taxon>Bacteria</taxon>
        <taxon>Bacillati</taxon>
        <taxon>Bacillota</taxon>
        <taxon>Bacilli</taxon>
        <taxon>Bacillales</taxon>
        <taxon>Bacillaceae</taxon>
        <taxon>Bacillus</taxon>
    </lineage>
</organism>
<gene>
    <name type="primary">yqfL</name>
    <name type="ordered locus">BSU25240</name>
</gene>
<evidence type="ECO:0000255" key="1">
    <source>
        <dbReference type="HAMAP-Rule" id="MF_00921"/>
    </source>
</evidence>
<evidence type="ECO:0000269" key="2">
    <source>
    </source>
</evidence>
<evidence type="ECO:0000305" key="3"/>
<protein>
    <recommendedName>
        <fullName evidence="1">Putative pyruvate, phosphate dikinase regulatory protein</fullName>
        <shortName evidence="1">PPDK regulatory protein</shortName>
        <ecNumber evidence="1">2.7.11.32</ecNumber>
        <ecNumber evidence="1">2.7.4.27</ecNumber>
    </recommendedName>
</protein>
<accession>P54470</accession>
<name>PDRP_BACSU</name>
<reference key="1">
    <citation type="journal article" date="1996" name="Microbiology">
        <title>Systematic sequencing of the 283 kb 210 degrees-232 degrees region of the Bacillus subtilis genome containing the skin element and many sporulation genes.</title>
        <authorList>
            <person name="Mizuno M."/>
            <person name="Masuda S."/>
            <person name="Takemaru K."/>
            <person name="Hosono S."/>
            <person name="Sato T."/>
            <person name="Takeuchi M."/>
            <person name="Kobayashi Y."/>
        </authorList>
    </citation>
    <scope>NUCLEOTIDE SEQUENCE [GENOMIC DNA]</scope>
    <source>
        <strain>168 / JH642</strain>
    </source>
</reference>
<reference key="2">
    <citation type="journal article" date="1997" name="Nature">
        <title>The complete genome sequence of the Gram-positive bacterium Bacillus subtilis.</title>
        <authorList>
            <person name="Kunst F."/>
            <person name="Ogasawara N."/>
            <person name="Moszer I."/>
            <person name="Albertini A.M."/>
            <person name="Alloni G."/>
            <person name="Azevedo V."/>
            <person name="Bertero M.G."/>
            <person name="Bessieres P."/>
            <person name="Bolotin A."/>
            <person name="Borchert S."/>
            <person name="Borriss R."/>
            <person name="Boursier L."/>
            <person name="Brans A."/>
            <person name="Braun M."/>
            <person name="Brignell S.C."/>
            <person name="Bron S."/>
            <person name="Brouillet S."/>
            <person name="Bruschi C.V."/>
            <person name="Caldwell B."/>
            <person name="Capuano V."/>
            <person name="Carter N.M."/>
            <person name="Choi S.-K."/>
            <person name="Codani J.-J."/>
            <person name="Connerton I.F."/>
            <person name="Cummings N.J."/>
            <person name="Daniel R.A."/>
            <person name="Denizot F."/>
            <person name="Devine K.M."/>
            <person name="Duesterhoeft A."/>
            <person name="Ehrlich S.D."/>
            <person name="Emmerson P.T."/>
            <person name="Entian K.-D."/>
            <person name="Errington J."/>
            <person name="Fabret C."/>
            <person name="Ferrari E."/>
            <person name="Foulger D."/>
            <person name="Fritz C."/>
            <person name="Fujita M."/>
            <person name="Fujita Y."/>
            <person name="Fuma S."/>
            <person name="Galizzi A."/>
            <person name="Galleron N."/>
            <person name="Ghim S.-Y."/>
            <person name="Glaser P."/>
            <person name="Goffeau A."/>
            <person name="Golightly E.J."/>
            <person name="Grandi G."/>
            <person name="Guiseppi G."/>
            <person name="Guy B.J."/>
            <person name="Haga K."/>
            <person name="Haiech J."/>
            <person name="Harwood C.R."/>
            <person name="Henaut A."/>
            <person name="Hilbert H."/>
            <person name="Holsappel S."/>
            <person name="Hosono S."/>
            <person name="Hullo M.-F."/>
            <person name="Itaya M."/>
            <person name="Jones L.-M."/>
            <person name="Joris B."/>
            <person name="Karamata D."/>
            <person name="Kasahara Y."/>
            <person name="Klaerr-Blanchard M."/>
            <person name="Klein C."/>
            <person name="Kobayashi Y."/>
            <person name="Koetter P."/>
            <person name="Koningstein G."/>
            <person name="Krogh S."/>
            <person name="Kumano M."/>
            <person name="Kurita K."/>
            <person name="Lapidus A."/>
            <person name="Lardinois S."/>
            <person name="Lauber J."/>
            <person name="Lazarevic V."/>
            <person name="Lee S.-M."/>
            <person name="Levine A."/>
            <person name="Liu H."/>
            <person name="Masuda S."/>
            <person name="Mauel C."/>
            <person name="Medigue C."/>
            <person name="Medina N."/>
            <person name="Mellado R.P."/>
            <person name="Mizuno M."/>
            <person name="Moestl D."/>
            <person name="Nakai S."/>
            <person name="Noback M."/>
            <person name="Noone D."/>
            <person name="O'Reilly M."/>
            <person name="Ogawa K."/>
            <person name="Ogiwara A."/>
            <person name="Oudega B."/>
            <person name="Park S.-H."/>
            <person name="Parro V."/>
            <person name="Pohl T.M."/>
            <person name="Portetelle D."/>
            <person name="Porwollik S."/>
            <person name="Prescott A.M."/>
            <person name="Presecan E."/>
            <person name="Pujic P."/>
            <person name="Purnelle B."/>
            <person name="Rapoport G."/>
            <person name="Rey M."/>
            <person name="Reynolds S."/>
            <person name="Rieger M."/>
            <person name="Rivolta C."/>
            <person name="Rocha E."/>
            <person name="Roche B."/>
            <person name="Rose M."/>
            <person name="Sadaie Y."/>
            <person name="Sato T."/>
            <person name="Scanlan E."/>
            <person name="Schleich S."/>
            <person name="Schroeter R."/>
            <person name="Scoffone F."/>
            <person name="Sekiguchi J."/>
            <person name="Sekowska A."/>
            <person name="Seror S.J."/>
            <person name="Serror P."/>
            <person name="Shin B.-S."/>
            <person name="Soldo B."/>
            <person name="Sorokin A."/>
            <person name="Tacconi E."/>
            <person name="Takagi T."/>
            <person name="Takahashi H."/>
            <person name="Takemaru K."/>
            <person name="Takeuchi M."/>
            <person name="Tamakoshi A."/>
            <person name="Tanaka T."/>
            <person name="Terpstra P."/>
            <person name="Tognoni A."/>
            <person name="Tosato V."/>
            <person name="Uchiyama S."/>
            <person name="Vandenbol M."/>
            <person name="Vannier F."/>
            <person name="Vassarotti A."/>
            <person name="Viari A."/>
            <person name="Wambutt R."/>
            <person name="Wedler E."/>
            <person name="Wedler H."/>
            <person name="Weitzenegger T."/>
            <person name="Winters P."/>
            <person name="Wipat A."/>
            <person name="Yamamoto H."/>
            <person name="Yamane K."/>
            <person name="Yasumoto K."/>
            <person name="Yata K."/>
            <person name="Yoshida K."/>
            <person name="Yoshikawa H.-F."/>
            <person name="Zumstein E."/>
            <person name="Yoshikawa H."/>
            <person name="Danchin A."/>
        </authorList>
    </citation>
    <scope>NUCLEOTIDE SEQUENCE [LARGE SCALE GENOMIC DNA]</scope>
    <source>
        <strain>168</strain>
    </source>
</reference>
<reference key="3">
    <citation type="journal article" date="1986" name="Nucleic Acids Res.">
        <title>Nucleotide sequence and organization of Bacillus subtilis RNA polymerase major sigma (sigma 43) operon.</title>
        <authorList>
            <person name="Wang L.F."/>
            <person name="Doi R.H."/>
        </authorList>
    </citation>
    <scope>NUCLEOTIDE SEQUENCE [GENOMIC DNA] OF 40-270</scope>
</reference>
<reference key="4">
    <citation type="journal article" date="2005" name="Mol. Microbiol.">
        <title>CcpN (YqzB), a novel regulator for CcpA-independent catabolite repression of Bacillus subtilis gluconeogenic genes.</title>
        <authorList>
            <person name="Servant P."/>
            <person name="Le Coq D."/>
            <person name="Aymerich S."/>
        </authorList>
    </citation>
    <scope>FUNCTION IN GLUCONEOGENESIS REGULATION</scope>
    <scope>INDUCTION</scope>
    <scope>DISRUPTION PHENOTYPE</scope>
</reference>
<feature type="chain" id="PRO_0000196630" description="Putative pyruvate, phosphate dikinase regulatory protein">
    <location>
        <begin position="1"/>
        <end position="270"/>
    </location>
</feature>
<feature type="binding site" evidence="1">
    <location>
        <begin position="151"/>
        <end position="158"/>
    </location>
    <ligand>
        <name>ADP</name>
        <dbReference type="ChEBI" id="CHEBI:456216"/>
    </ligand>
</feature>
<feature type="sequence conflict" description="In Ref. 3." evidence="3" ref="3">
    <original>IP</original>
    <variation>NS</variation>
    <location>
        <begin position="40"/>
        <end position="41"/>
    </location>
</feature>
<dbReference type="EC" id="2.7.11.32" evidence="1"/>
<dbReference type="EC" id="2.7.4.27" evidence="1"/>
<dbReference type="EMBL" id="D84432">
    <property type="protein sequence ID" value="BAA12486.1"/>
    <property type="molecule type" value="Genomic_DNA"/>
</dbReference>
<dbReference type="EMBL" id="AL009126">
    <property type="protein sequence ID" value="CAB14453.1"/>
    <property type="molecule type" value="Genomic_DNA"/>
</dbReference>
<dbReference type="EMBL" id="X03897">
    <property type="status" value="NOT_ANNOTATED_CDS"/>
    <property type="molecule type" value="Genomic_DNA"/>
</dbReference>
<dbReference type="PIR" id="G69953">
    <property type="entry name" value="G69953"/>
</dbReference>
<dbReference type="RefSeq" id="WP_003230064.1">
    <property type="nucleotide sequence ID" value="NZ_OZ025638.1"/>
</dbReference>
<dbReference type="SMR" id="P54470"/>
<dbReference type="FunCoup" id="P54470">
    <property type="interactions" value="232"/>
</dbReference>
<dbReference type="STRING" id="224308.BSU25240"/>
<dbReference type="jPOST" id="P54470"/>
<dbReference type="PaxDb" id="224308-BSU25240"/>
<dbReference type="EnsemblBacteria" id="CAB14453">
    <property type="protein sequence ID" value="CAB14453"/>
    <property type="gene ID" value="BSU_25240"/>
</dbReference>
<dbReference type="GeneID" id="937889"/>
<dbReference type="KEGG" id="bsu:BSU25240"/>
<dbReference type="PATRIC" id="fig|224308.179.peg.2743"/>
<dbReference type="eggNOG" id="COG1806">
    <property type="taxonomic scope" value="Bacteria"/>
</dbReference>
<dbReference type="InParanoid" id="P54470"/>
<dbReference type="OrthoDB" id="9782201at2"/>
<dbReference type="PhylomeDB" id="P54470"/>
<dbReference type="BioCyc" id="BSUB:BSU25240-MONOMER"/>
<dbReference type="Proteomes" id="UP000001570">
    <property type="component" value="Chromosome"/>
</dbReference>
<dbReference type="GO" id="GO:0043531">
    <property type="term" value="F:ADP binding"/>
    <property type="evidence" value="ECO:0007669"/>
    <property type="project" value="UniProtKB-UniRule"/>
</dbReference>
<dbReference type="GO" id="GO:0005524">
    <property type="term" value="F:ATP binding"/>
    <property type="evidence" value="ECO:0007669"/>
    <property type="project" value="InterPro"/>
</dbReference>
<dbReference type="GO" id="GO:0016776">
    <property type="term" value="F:phosphotransferase activity, phosphate group as acceptor"/>
    <property type="evidence" value="ECO:0007669"/>
    <property type="project" value="UniProtKB-UniRule"/>
</dbReference>
<dbReference type="GO" id="GO:0004674">
    <property type="term" value="F:protein serine/threonine kinase activity"/>
    <property type="evidence" value="ECO:0007669"/>
    <property type="project" value="UniProtKB-UniRule"/>
</dbReference>
<dbReference type="HAMAP" id="MF_00921">
    <property type="entry name" value="PDRP"/>
    <property type="match status" value="1"/>
</dbReference>
<dbReference type="InterPro" id="IPR005177">
    <property type="entry name" value="Kinase-pyrophosphorylase"/>
</dbReference>
<dbReference type="InterPro" id="IPR026565">
    <property type="entry name" value="PPDK_reg"/>
</dbReference>
<dbReference type="NCBIfam" id="NF003742">
    <property type="entry name" value="PRK05339.1"/>
    <property type="match status" value="1"/>
</dbReference>
<dbReference type="PANTHER" id="PTHR31756">
    <property type="entry name" value="PYRUVATE, PHOSPHATE DIKINASE REGULATORY PROTEIN 1, CHLOROPLASTIC"/>
    <property type="match status" value="1"/>
</dbReference>
<dbReference type="PANTHER" id="PTHR31756:SF3">
    <property type="entry name" value="PYRUVATE, PHOSPHATE DIKINASE REGULATORY PROTEIN 1, CHLOROPLASTIC"/>
    <property type="match status" value="1"/>
</dbReference>
<dbReference type="Pfam" id="PF03618">
    <property type="entry name" value="Kinase-PPPase"/>
    <property type="match status" value="1"/>
</dbReference>
<comment type="function">
    <text evidence="1 2">Bifunctional serine/threonine kinase and phosphorylase involved in the regulation of the pyruvate, phosphate dikinase (PPDK) by catalyzing its phosphorylation/dephosphorylation.</text>
</comment>
<comment type="catalytic activity">
    <reaction evidence="1">
        <text>N(tele)-phospho-L-histidyl/L-threonyl-[pyruvate, phosphate dikinase] + ADP = N(tele)-phospho-L-histidyl/O-phospho-L-threonyl-[pyruvate, phosphate dikinase] + AMP + H(+)</text>
        <dbReference type="Rhea" id="RHEA:43692"/>
        <dbReference type="Rhea" id="RHEA-COMP:10650"/>
        <dbReference type="Rhea" id="RHEA-COMP:10651"/>
        <dbReference type="ChEBI" id="CHEBI:15378"/>
        <dbReference type="ChEBI" id="CHEBI:30013"/>
        <dbReference type="ChEBI" id="CHEBI:61977"/>
        <dbReference type="ChEBI" id="CHEBI:83586"/>
        <dbReference type="ChEBI" id="CHEBI:456215"/>
        <dbReference type="ChEBI" id="CHEBI:456216"/>
        <dbReference type="EC" id="2.7.11.32"/>
    </reaction>
</comment>
<comment type="catalytic activity">
    <reaction evidence="1">
        <text>N(tele)-phospho-L-histidyl/O-phospho-L-threonyl-[pyruvate, phosphate dikinase] + phosphate + H(+) = N(tele)-phospho-L-histidyl/L-threonyl-[pyruvate, phosphate dikinase] + diphosphate</text>
        <dbReference type="Rhea" id="RHEA:43696"/>
        <dbReference type="Rhea" id="RHEA-COMP:10650"/>
        <dbReference type="Rhea" id="RHEA-COMP:10651"/>
        <dbReference type="ChEBI" id="CHEBI:15378"/>
        <dbReference type="ChEBI" id="CHEBI:30013"/>
        <dbReference type="ChEBI" id="CHEBI:33019"/>
        <dbReference type="ChEBI" id="CHEBI:43474"/>
        <dbReference type="ChEBI" id="CHEBI:61977"/>
        <dbReference type="ChEBI" id="CHEBI:83586"/>
        <dbReference type="EC" id="2.7.4.27"/>
    </reaction>
</comment>
<comment type="induction">
    <text evidence="2">Constitutively expressed.</text>
</comment>
<comment type="disruption phenotype">
    <text evidence="2">Lowers the level of gapB and pckA transcription threefold under both glycolytic and gluconeogenic conditions.</text>
</comment>
<comment type="similarity">
    <text evidence="1">Belongs to the pyruvate, phosphate/water dikinase regulatory protein family. PDRP subfamily.</text>
</comment>
<proteinExistence type="evidence at protein level"/>
<keyword id="KW-0418">Kinase</keyword>
<keyword id="KW-0547">Nucleotide-binding</keyword>
<keyword id="KW-1185">Reference proteome</keyword>
<keyword id="KW-0723">Serine/threonine-protein kinase</keyword>
<keyword id="KW-0808">Transferase</keyword>
<sequence length="270" mass="30349">MNNRIIYVVSDSVGETAELVVKAALSQFNGSADDTHVRRIPYVEDIGTINEVISLAKADGGIICFTLVVPEIREYLIAEAEKANVLYYDIIGPLIDKMETAYGLTAKYEPGRVRQLDEDYFKKVEAIEFAVKYDDGRDPRGILKADIVLIGVSRTSKTPLSQYLAHKRLKVANVPIVPEVDPPEELFNVDPKKCIGLKISPDKLNHIRKERLKSLGLNDKAIYANINRIKEELEYFEKIVDRIGCQVVDVSNKAVEETANIIHHLKTKNI</sequence>